<accession>Q3AW85</accession>
<dbReference type="EMBL" id="CP000097">
    <property type="protein sequence ID" value="ABB26921.1"/>
    <property type="molecule type" value="Genomic_DNA"/>
</dbReference>
<dbReference type="RefSeq" id="WP_011360720.1">
    <property type="nucleotide sequence ID" value="NC_007513.1"/>
</dbReference>
<dbReference type="SMR" id="Q3AW85"/>
<dbReference type="STRING" id="316279.Syncc9902_1963"/>
<dbReference type="KEGG" id="sye:Syncc9902_1963"/>
<dbReference type="eggNOG" id="COG0255">
    <property type="taxonomic scope" value="Bacteria"/>
</dbReference>
<dbReference type="HOGENOM" id="CLU_158491_0_1_3"/>
<dbReference type="OrthoDB" id="9815192at2"/>
<dbReference type="Proteomes" id="UP000002712">
    <property type="component" value="Chromosome"/>
</dbReference>
<dbReference type="GO" id="GO:0022625">
    <property type="term" value="C:cytosolic large ribosomal subunit"/>
    <property type="evidence" value="ECO:0007669"/>
    <property type="project" value="TreeGrafter"/>
</dbReference>
<dbReference type="GO" id="GO:0003735">
    <property type="term" value="F:structural constituent of ribosome"/>
    <property type="evidence" value="ECO:0007669"/>
    <property type="project" value="InterPro"/>
</dbReference>
<dbReference type="GO" id="GO:0006412">
    <property type="term" value="P:translation"/>
    <property type="evidence" value="ECO:0007669"/>
    <property type="project" value="UniProtKB-UniRule"/>
</dbReference>
<dbReference type="CDD" id="cd00427">
    <property type="entry name" value="Ribosomal_L29_HIP"/>
    <property type="match status" value="1"/>
</dbReference>
<dbReference type="Gene3D" id="1.10.287.310">
    <property type="match status" value="1"/>
</dbReference>
<dbReference type="HAMAP" id="MF_00374">
    <property type="entry name" value="Ribosomal_uL29"/>
    <property type="match status" value="1"/>
</dbReference>
<dbReference type="InterPro" id="IPR050063">
    <property type="entry name" value="Ribosomal_protein_uL29"/>
</dbReference>
<dbReference type="InterPro" id="IPR001854">
    <property type="entry name" value="Ribosomal_uL29"/>
</dbReference>
<dbReference type="InterPro" id="IPR036049">
    <property type="entry name" value="Ribosomal_uL29_sf"/>
</dbReference>
<dbReference type="NCBIfam" id="TIGR00012">
    <property type="entry name" value="L29"/>
    <property type="match status" value="1"/>
</dbReference>
<dbReference type="PANTHER" id="PTHR10916">
    <property type="entry name" value="60S RIBOSOMAL PROTEIN L35/50S RIBOSOMAL PROTEIN L29"/>
    <property type="match status" value="1"/>
</dbReference>
<dbReference type="PANTHER" id="PTHR10916:SF0">
    <property type="entry name" value="LARGE RIBOSOMAL SUBUNIT PROTEIN UL29C"/>
    <property type="match status" value="1"/>
</dbReference>
<dbReference type="Pfam" id="PF00831">
    <property type="entry name" value="Ribosomal_L29"/>
    <property type="match status" value="1"/>
</dbReference>
<dbReference type="SUPFAM" id="SSF46561">
    <property type="entry name" value="Ribosomal protein L29 (L29p)"/>
    <property type="match status" value="1"/>
</dbReference>
<gene>
    <name evidence="1" type="primary">rpmC</name>
    <name evidence="1" type="synonym">rpl29</name>
    <name type="ordered locus">Syncc9902_1963</name>
</gene>
<organism>
    <name type="scientific">Synechococcus sp. (strain CC9902)</name>
    <dbReference type="NCBI Taxonomy" id="316279"/>
    <lineage>
        <taxon>Bacteria</taxon>
        <taxon>Bacillati</taxon>
        <taxon>Cyanobacteriota</taxon>
        <taxon>Cyanophyceae</taxon>
        <taxon>Synechococcales</taxon>
        <taxon>Synechococcaceae</taxon>
        <taxon>Synechococcus</taxon>
    </lineage>
</organism>
<name>RL29_SYNS9</name>
<evidence type="ECO:0000255" key="1">
    <source>
        <dbReference type="HAMAP-Rule" id="MF_00374"/>
    </source>
</evidence>
<evidence type="ECO:0000305" key="2"/>
<proteinExistence type="inferred from homology"/>
<sequence>MARPNTSEVRNLSDADINEKIDGLRRELFQLRFEQATRQLANTHRFKEARIKLAQLLTVQSERQRSTAS</sequence>
<reference key="1">
    <citation type="submission" date="2005-08" db="EMBL/GenBank/DDBJ databases">
        <title>Complete sequence of Synechococcus sp. CC9902.</title>
        <authorList>
            <person name="Copeland A."/>
            <person name="Lucas S."/>
            <person name="Lapidus A."/>
            <person name="Barry K."/>
            <person name="Detter J.C."/>
            <person name="Glavina T."/>
            <person name="Hammon N."/>
            <person name="Israni S."/>
            <person name="Pitluck S."/>
            <person name="Martinez M."/>
            <person name="Schmutz J."/>
            <person name="Larimer F."/>
            <person name="Land M."/>
            <person name="Kyrpides N."/>
            <person name="Ivanova N."/>
            <person name="Richardson P."/>
        </authorList>
    </citation>
    <scope>NUCLEOTIDE SEQUENCE [LARGE SCALE GENOMIC DNA]</scope>
    <source>
        <strain>CC9902</strain>
    </source>
</reference>
<protein>
    <recommendedName>
        <fullName evidence="1">Large ribosomal subunit protein uL29</fullName>
    </recommendedName>
    <alternativeName>
        <fullName evidence="2">50S ribosomal protein L29</fullName>
    </alternativeName>
</protein>
<keyword id="KW-1185">Reference proteome</keyword>
<keyword id="KW-0687">Ribonucleoprotein</keyword>
<keyword id="KW-0689">Ribosomal protein</keyword>
<feature type="chain" id="PRO_1000007642" description="Large ribosomal subunit protein uL29">
    <location>
        <begin position="1"/>
        <end position="69"/>
    </location>
</feature>
<comment type="similarity">
    <text evidence="1">Belongs to the universal ribosomal protein uL29 family.</text>
</comment>